<dbReference type="EMBL" id="CP001598">
    <property type="protein sequence ID" value="ACQ48884.1"/>
    <property type="molecule type" value="Genomic_DNA"/>
</dbReference>
<dbReference type="RefSeq" id="WP_000421288.1">
    <property type="nucleotide sequence ID" value="NC_012659.1"/>
</dbReference>
<dbReference type="SMR" id="C3P5N0"/>
<dbReference type="GeneID" id="83637535"/>
<dbReference type="KEGG" id="bai:BAA_3989"/>
<dbReference type="HOGENOM" id="CLU_089581_0_0_9"/>
<dbReference type="GO" id="GO:0005737">
    <property type="term" value="C:cytoplasm"/>
    <property type="evidence" value="ECO:0007669"/>
    <property type="project" value="UniProtKB-SubCell"/>
</dbReference>
<dbReference type="GO" id="GO:0003677">
    <property type="term" value="F:DNA binding"/>
    <property type="evidence" value="ECO:0007669"/>
    <property type="project" value="UniProtKB-UniRule"/>
</dbReference>
<dbReference type="GO" id="GO:0003700">
    <property type="term" value="F:DNA-binding transcription factor activity"/>
    <property type="evidence" value="ECO:0007669"/>
    <property type="project" value="InterPro"/>
</dbReference>
<dbReference type="GO" id="GO:0005525">
    <property type="term" value="F:GTP binding"/>
    <property type="evidence" value="ECO:0007669"/>
    <property type="project" value="InterPro"/>
</dbReference>
<dbReference type="GO" id="GO:0045892">
    <property type="term" value="P:negative regulation of DNA-templated transcription"/>
    <property type="evidence" value="ECO:0007669"/>
    <property type="project" value="UniProtKB-UniRule"/>
</dbReference>
<dbReference type="FunFam" id="1.10.10.10:FF:000034">
    <property type="entry name" value="GTP-sensing transcriptional pleiotropic repressor CodY"/>
    <property type="match status" value="1"/>
</dbReference>
<dbReference type="FunFam" id="3.30.450.40:FF:000003">
    <property type="entry name" value="GTP-sensing transcriptional pleiotropic repressor CodY"/>
    <property type="match status" value="1"/>
</dbReference>
<dbReference type="Gene3D" id="3.30.450.40">
    <property type="match status" value="1"/>
</dbReference>
<dbReference type="Gene3D" id="1.10.10.10">
    <property type="entry name" value="Winged helix-like DNA-binding domain superfamily/Winged helix DNA-binding domain"/>
    <property type="match status" value="1"/>
</dbReference>
<dbReference type="HAMAP" id="MF_00621">
    <property type="entry name" value="HTH_type_CodY"/>
    <property type="match status" value="1"/>
</dbReference>
<dbReference type="InterPro" id="IPR014154">
    <property type="entry name" value="CodY"/>
</dbReference>
<dbReference type="InterPro" id="IPR029016">
    <property type="entry name" value="GAF-like_dom_sf"/>
</dbReference>
<dbReference type="InterPro" id="IPR013198">
    <property type="entry name" value="GTP_trans_reg_CodY_C"/>
</dbReference>
<dbReference type="InterPro" id="IPR010312">
    <property type="entry name" value="Transc_reg_CodY_N"/>
</dbReference>
<dbReference type="InterPro" id="IPR036388">
    <property type="entry name" value="WH-like_DNA-bd_sf"/>
</dbReference>
<dbReference type="InterPro" id="IPR036390">
    <property type="entry name" value="WH_DNA-bd_sf"/>
</dbReference>
<dbReference type="NCBIfam" id="TIGR02787">
    <property type="entry name" value="codY_Gpos"/>
    <property type="match status" value="1"/>
</dbReference>
<dbReference type="NCBIfam" id="NF003170">
    <property type="entry name" value="PRK04158.1"/>
    <property type="match status" value="1"/>
</dbReference>
<dbReference type="PANTHER" id="PTHR40062:SF1">
    <property type="entry name" value="GLOBAL TRANSCRIPTIONAL REGULATOR CODY"/>
    <property type="match status" value="1"/>
</dbReference>
<dbReference type="PANTHER" id="PTHR40062">
    <property type="entry name" value="GTP-SENSING TRANSCRIPTIONAL PLEIOTROPIC REPRESSOR CODY"/>
    <property type="match status" value="1"/>
</dbReference>
<dbReference type="Pfam" id="PF06018">
    <property type="entry name" value="CodY"/>
    <property type="match status" value="1"/>
</dbReference>
<dbReference type="Pfam" id="PF08222">
    <property type="entry name" value="HTH_CodY"/>
    <property type="match status" value="1"/>
</dbReference>
<dbReference type="PIRSF" id="PIRSF011572">
    <property type="entry name" value="GTP_sensing_CodY"/>
    <property type="match status" value="1"/>
</dbReference>
<dbReference type="SUPFAM" id="SSF46785">
    <property type="entry name" value="Winged helix' DNA-binding domain"/>
    <property type="match status" value="1"/>
</dbReference>
<name>CODY_BACAA</name>
<comment type="function">
    <text evidence="1">DNA-binding global transcriptional regulator which is involved in the adaptive response to starvation and acts by directly or indirectly controlling the expression of numerous genes in response to nutrient availability. During rapid exponential growth, CodY is highly active and represses genes whose products allow adaptation to nutrient depletion.</text>
</comment>
<comment type="subcellular location">
    <subcellularLocation>
        <location evidence="1">Cytoplasm</location>
    </subcellularLocation>
</comment>
<comment type="similarity">
    <text evidence="1">Belongs to the CodY family.</text>
</comment>
<accession>C3P5N0</accession>
<proteinExistence type="inferred from homology"/>
<evidence type="ECO:0000255" key="1">
    <source>
        <dbReference type="HAMAP-Rule" id="MF_00621"/>
    </source>
</evidence>
<protein>
    <recommendedName>
        <fullName evidence="1">Global transcriptional regulator CodY</fullName>
    </recommendedName>
</protein>
<reference key="1">
    <citation type="submission" date="2009-04" db="EMBL/GenBank/DDBJ databases">
        <title>Genome sequence of Bacillus anthracis A0248.</title>
        <authorList>
            <person name="Dodson R.J."/>
            <person name="Munk A.C."/>
            <person name="Bruce D."/>
            <person name="Detter C."/>
            <person name="Tapia R."/>
            <person name="Sutton G."/>
            <person name="Sims D."/>
            <person name="Brettin T."/>
        </authorList>
    </citation>
    <scope>NUCLEOTIDE SEQUENCE [LARGE SCALE GENOMIC DNA]</scope>
    <source>
        <strain>A0248</strain>
    </source>
</reference>
<gene>
    <name evidence="1" type="primary">codY</name>
    <name type="ordered locus">BAA_3989</name>
</gene>
<keyword id="KW-0963">Cytoplasm</keyword>
<keyword id="KW-0238">DNA-binding</keyword>
<keyword id="KW-0597">Phosphoprotein</keyword>
<keyword id="KW-0678">Repressor</keyword>
<keyword id="KW-0804">Transcription</keyword>
<keyword id="KW-0805">Transcription regulation</keyword>
<organism>
    <name type="scientific">Bacillus anthracis (strain A0248)</name>
    <dbReference type="NCBI Taxonomy" id="592021"/>
    <lineage>
        <taxon>Bacteria</taxon>
        <taxon>Bacillati</taxon>
        <taxon>Bacillota</taxon>
        <taxon>Bacilli</taxon>
        <taxon>Bacillales</taxon>
        <taxon>Bacillaceae</taxon>
        <taxon>Bacillus</taxon>
        <taxon>Bacillus cereus group</taxon>
    </lineage>
</organism>
<sequence length="259" mass="28774">MELLAKTRKLNALLQSAAGKPVNFREMSDTMCEVIEANVFVVSRRGKLLGYAIHQQIENERMKQMLAERQFPEEYTQSLFNITETSSNLDVNSAYTAFPVENKELFGQGLTTIVPIVGGGERLGTLVLARLGQEFLDDDLILAEYSSTVVGMEILREKAEEIEEEARSKAVVQMAISSLSYSELEAIEHIFEELNGTEGLLVASKIADRVGITRSVIVNALRKLESAGVIESRSLGMKGTYIKVLNDKFLHELAKLKTN</sequence>
<feature type="chain" id="PRO_1000147198" description="Global transcriptional regulator CodY">
    <location>
        <begin position="1"/>
        <end position="259"/>
    </location>
</feature>
<feature type="DNA-binding region" description="H-T-H motif" evidence="1">
    <location>
        <begin position="203"/>
        <end position="222"/>
    </location>
</feature>
<feature type="region of interest" description="GAF domain" evidence="1">
    <location>
        <begin position="1"/>
        <end position="155"/>
    </location>
</feature>
<feature type="modified residue" description="Phosphoserine" evidence="1">
    <location>
        <position position="215"/>
    </location>
</feature>